<feature type="chain" id="PRO_0000318889" description="Transcriptional regulator MraZ">
    <location>
        <begin position="1"/>
        <end position="162"/>
    </location>
</feature>
<feature type="domain" description="SpoVT-AbrB 1" evidence="2">
    <location>
        <begin position="11"/>
        <end position="62"/>
    </location>
</feature>
<feature type="domain" description="SpoVT-AbrB 2" evidence="2">
    <location>
        <begin position="98"/>
        <end position="141"/>
    </location>
</feature>
<gene>
    <name evidence="1" type="primary">mraZ</name>
    <name type="ordered locus">Ppro_3298</name>
</gene>
<comment type="subunit">
    <text evidence="1">Forms oligomers.</text>
</comment>
<comment type="subcellular location">
    <subcellularLocation>
        <location evidence="1">Cytoplasm</location>
        <location evidence="1">Nucleoid</location>
    </subcellularLocation>
</comment>
<comment type="similarity">
    <text evidence="1">Belongs to the MraZ family.</text>
</comment>
<organism>
    <name type="scientific">Pelobacter propionicus (strain DSM 2379 / NBRC 103807 / OttBd1)</name>
    <dbReference type="NCBI Taxonomy" id="338966"/>
    <lineage>
        <taxon>Bacteria</taxon>
        <taxon>Pseudomonadati</taxon>
        <taxon>Thermodesulfobacteriota</taxon>
        <taxon>Desulfuromonadia</taxon>
        <taxon>Desulfuromonadales</taxon>
        <taxon>Desulfuromonadaceae</taxon>
        <taxon>Pelobacter</taxon>
    </lineage>
</organism>
<accession>A1AU70</accession>
<keyword id="KW-0963">Cytoplasm</keyword>
<keyword id="KW-0238">DNA-binding</keyword>
<keyword id="KW-1185">Reference proteome</keyword>
<keyword id="KW-0677">Repeat</keyword>
<keyword id="KW-0804">Transcription</keyword>
<keyword id="KW-0805">Transcription regulation</keyword>
<sequence>MPDKDAIFGGEHPSTIDSKGRTCIPARFREALVQAFADERFVMTKARPISLGGERYARGLSVYPLSAWNDIKRRALANEGGYTSTQLDSIKRQFLNPAVECLADKLGRVLIPPSLRSHAGLERELWFVGMDGRFDIWSRDTYDRVNDQDEQNLPADLTAIGF</sequence>
<protein>
    <recommendedName>
        <fullName>Transcriptional regulator MraZ</fullName>
    </recommendedName>
</protein>
<dbReference type="EMBL" id="CP000482">
    <property type="protein sequence ID" value="ABL00891.1"/>
    <property type="molecule type" value="Genomic_DNA"/>
</dbReference>
<dbReference type="RefSeq" id="WP_011737108.1">
    <property type="nucleotide sequence ID" value="NC_008609.1"/>
</dbReference>
<dbReference type="SMR" id="A1AU70"/>
<dbReference type="STRING" id="338966.Ppro_3298"/>
<dbReference type="KEGG" id="ppd:Ppro_3298"/>
<dbReference type="eggNOG" id="COG2001">
    <property type="taxonomic scope" value="Bacteria"/>
</dbReference>
<dbReference type="HOGENOM" id="CLU_107907_0_5_7"/>
<dbReference type="OrthoDB" id="9807753at2"/>
<dbReference type="Proteomes" id="UP000006732">
    <property type="component" value="Chromosome"/>
</dbReference>
<dbReference type="GO" id="GO:0005737">
    <property type="term" value="C:cytoplasm"/>
    <property type="evidence" value="ECO:0007669"/>
    <property type="project" value="UniProtKB-UniRule"/>
</dbReference>
<dbReference type="GO" id="GO:0009295">
    <property type="term" value="C:nucleoid"/>
    <property type="evidence" value="ECO:0007669"/>
    <property type="project" value="UniProtKB-SubCell"/>
</dbReference>
<dbReference type="GO" id="GO:0003700">
    <property type="term" value="F:DNA-binding transcription factor activity"/>
    <property type="evidence" value="ECO:0007669"/>
    <property type="project" value="UniProtKB-UniRule"/>
</dbReference>
<dbReference type="GO" id="GO:0000976">
    <property type="term" value="F:transcription cis-regulatory region binding"/>
    <property type="evidence" value="ECO:0007669"/>
    <property type="project" value="TreeGrafter"/>
</dbReference>
<dbReference type="GO" id="GO:2000143">
    <property type="term" value="P:negative regulation of DNA-templated transcription initiation"/>
    <property type="evidence" value="ECO:0007669"/>
    <property type="project" value="TreeGrafter"/>
</dbReference>
<dbReference type="CDD" id="cd16321">
    <property type="entry name" value="MraZ_C"/>
    <property type="match status" value="1"/>
</dbReference>
<dbReference type="CDD" id="cd16320">
    <property type="entry name" value="MraZ_N"/>
    <property type="match status" value="1"/>
</dbReference>
<dbReference type="Gene3D" id="3.40.1550.20">
    <property type="entry name" value="Transcriptional regulator MraZ domain"/>
    <property type="match status" value="1"/>
</dbReference>
<dbReference type="HAMAP" id="MF_01008">
    <property type="entry name" value="MraZ"/>
    <property type="match status" value="1"/>
</dbReference>
<dbReference type="InterPro" id="IPR003444">
    <property type="entry name" value="MraZ"/>
</dbReference>
<dbReference type="InterPro" id="IPR035644">
    <property type="entry name" value="MraZ_C"/>
</dbReference>
<dbReference type="InterPro" id="IPR020603">
    <property type="entry name" value="MraZ_dom"/>
</dbReference>
<dbReference type="InterPro" id="IPR035642">
    <property type="entry name" value="MraZ_N"/>
</dbReference>
<dbReference type="InterPro" id="IPR038619">
    <property type="entry name" value="MraZ_sf"/>
</dbReference>
<dbReference type="InterPro" id="IPR007159">
    <property type="entry name" value="SpoVT-AbrB_dom"/>
</dbReference>
<dbReference type="InterPro" id="IPR037914">
    <property type="entry name" value="SpoVT-AbrB_sf"/>
</dbReference>
<dbReference type="NCBIfam" id="NF001482">
    <property type="entry name" value="PRK00326.3-4"/>
    <property type="match status" value="1"/>
</dbReference>
<dbReference type="PANTHER" id="PTHR34701">
    <property type="entry name" value="TRANSCRIPTIONAL REGULATOR MRAZ"/>
    <property type="match status" value="1"/>
</dbReference>
<dbReference type="PANTHER" id="PTHR34701:SF1">
    <property type="entry name" value="TRANSCRIPTIONAL REGULATOR MRAZ"/>
    <property type="match status" value="1"/>
</dbReference>
<dbReference type="Pfam" id="PF02381">
    <property type="entry name" value="MraZ"/>
    <property type="match status" value="2"/>
</dbReference>
<dbReference type="SUPFAM" id="SSF89447">
    <property type="entry name" value="AbrB/MazE/MraZ-like"/>
    <property type="match status" value="1"/>
</dbReference>
<dbReference type="PROSITE" id="PS51740">
    <property type="entry name" value="SPOVT_ABRB"/>
    <property type="match status" value="2"/>
</dbReference>
<evidence type="ECO:0000255" key="1">
    <source>
        <dbReference type="HAMAP-Rule" id="MF_01008"/>
    </source>
</evidence>
<evidence type="ECO:0000255" key="2">
    <source>
        <dbReference type="PROSITE-ProRule" id="PRU01076"/>
    </source>
</evidence>
<proteinExistence type="inferred from homology"/>
<reference key="1">
    <citation type="submission" date="2006-10" db="EMBL/GenBank/DDBJ databases">
        <title>Complete sequence of chromosome of Pelobacter propionicus DSM 2379.</title>
        <authorList>
            <consortium name="US DOE Joint Genome Institute"/>
            <person name="Copeland A."/>
            <person name="Lucas S."/>
            <person name="Lapidus A."/>
            <person name="Barry K."/>
            <person name="Detter J.C."/>
            <person name="Glavina del Rio T."/>
            <person name="Hammon N."/>
            <person name="Israni S."/>
            <person name="Dalin E."/>
            <person name="Tice H."/>
            <person name="Pitluck S."/>
            <person name="Saunders E."/>
            <person name="Brettin T."/>
            <person name="Bruce D."/>
            <person name="Han C."/>
            <person name="Tapia R."/>
            <person name="Schmutz J."/>
            <person name="Larimer F."/>
            <person name="Land M."/>
            <person name="Hauser L."/>
            <person name="Kyrpides N."/>
            <person name="Kim E."/>
            <person name="Lovley D."/>
            <person name="Richardson P."/>
        </authorList>
    </citation>
    <scope>NUCLEOTIDE SEQUENCE [LARGE SCALE GENOMIC DNA]</scope>
    <source>
        <strain>DSM 2379 / NBRC 103807 / OttBd1</strain>
    </source>
</reference>
<name>MRAZ_PELPD</name>